<dbReference type="EC" id="3.6.1.-" evidence="1"/>
<dbReference type="EMBL" id="AL935263">
    <property type="protein sequence ID" value="CCC78989.1"/>
    <property type="molecule type" value="Genomic_DNA"/>
</dbReference>
<dbReference type="RefSeq" id="WP_011101507.1">
    <property type="nucleotide sequence ID" value="NC_004567.2"/>
</dbReference>
<dbReference type="RefSeq" id="YP_004889503.1">
    <property type="nucleotide sequence ID" value="NC_004567.2"/>
</dbReference>
<dbReference type="SMR" id="Q88WF3"/>
<dbReference type="STRING" id="220668.lp_1687"/>
<dbReference type="EnsemblBacteria" id="CCC78989">
    <property type="protein sequence ID" value="CCC78989"/>
    <property type="gene ID" value="lp_1687"/>
</dbReference>
<dbReference type="KEGG" id="lpl:lp_1687"/>
<dbReference type="PATRIC" id="fig|220668.9.peg.1425"/>
<dbReference type="eggNOG" id="COG1162">
    <property type="taxonomic scope" value="Bacteria"/>
</dbReference>
<dbReference type="HOGENOM" id="CLU_033617_0_1_9"/>
<dbReference type="OrthoDB" id="9809485at2"/>
<dbReference type="PhylomeDB" id="Q88WF3"/>
<dbReference type="Proteomes" id="UP000000432">
    <property type="component" value="Chromosome"/>
</dbReference>
<dbReference type="GO" id="GO:0005737">
    <property type="term" value="C:cytoplasm"/>
    <property type="evidence" value="ECO:0007669"/>
    <property type="project" value="UniProtKB-SubCell"/>
</dbReference>
<dbReference type="GO" id="GO:0005525">
    <property type="term" value="F:GTP binding"/>
    <property type="evidence" value="ECO:0007669"/>
    <property type="project" value="UniProtKB-UniRule"/>
</dbReference>
<dbReference type="GO" id="GO:0003924">
    <property type="term" value="F:GTPase activity"/>
    <property type="evidence" value="ECO:0007669"/>
    <property type="project" value="UniProtKB-UniRule"/>
</dbReference>
<dbReference type="GO" id="GO:0046872">
    <property type="term" value="F:metal ion binding"/>
    <property type="evidence" value="ECO:0007669"/>
    <property type="project" value="UniProtKB-KW"/>
</dbReference>
<dbReference type="GO" id="GO:0019843">
    <property type="term" value="F:rRNA binding"/>
    <property type="evidence" value="ECO:0007669"/>
    <property type="project" value="UniProtKB-KW"/>
</dbReference>
<dbReference type="GO" id="GO:0042274">
    <property type="term" value="P:ribosomal small subunit biogenesis"/>
    <property type="evidence" value="ECO:0007669"/>
    <property type="project" value="UniProtKB-UniRule"/>
</dbReference>
<dbReference type="CDD" id="cd01854">
    <property type="entry name" value="YjeQ_EngC"/>
    <property type="match status" value="1"/>
</dbReference>
<dbReference type="Gene3D" id="3.40.50.300">
    <property type="entry name" value="P-loop containing nucleotide triphosphate hydrolases"/>
    <property type="match status" value="1"/>
</dbReference>
<dbReference type="Gene3D" id="1.10.40.50">
    <property type="entry name" value="Probable gtpase engc, domain 3"/>
    <property type="match status" value="1"/>
</dbReference>
<dbReference type="HAMAP" id="MF_01820">
    <property type="entry name" value="GTPase_RsgA"/>
    <property type="match status" value="1"/>
</dbReference>
<dbReference type="InterPro" id="IPR030378">
    <property type="entry name" value="G_CP_dom"/>
</dbReference>
<dbReference type="InterPro" id="IPR027417">
    <property type="entry name" value="P-loop_NTPase"/>
</dbReference>
<dbReference type="InterPro" id="IPR004881">
    <property type="entry name" value="Ribosome_biogen_GTPase_RsgA"/>
</dbReference>
<dbReference type="InterPro" id="IPR010914">
    <property type="entry name" value="RsgA_GTPase_dom"/>
</dbReference>
<dbReference type="NCBIfam" id="TIGR00157">
    <property type="entry name" value="ribosome small subunit-dependent GTPase A"/>
    <property type="match status" value="1"/>
</dbReference>
<dbReference type="PANTHER" id="PTHR32120">
    <property type="entry name" value="SMALL RIBOSOMAL SUBUNIT BIOGENESIS GTPASE RSGA"/>
    <property type="match status" value="1"/>
</dbReference>
<dbReference type="PANTHER" id="PTHR32120:SF10">
    <property type="entry name" value="SMALL RIBOSOMAL SUBUNIT BIOGENESIS GTPASE RSGA"/>
    <property type="match status" value="1"/>
</dbReference>
<dbReference type="Pfam" id="PF03193">
    <property type="entry name" value="RsgA_GTPase"/>
    <property type="match status" value="1"/>
</dbReference>
<dbReference type="SUPFAM" id="SSF52540">
    <property type="entry name" value="P-loop containing nucleoside triphosphate hydrolases"/>
    <property type="match status" value="1"/>
</dbReference>
<dbReference type="PROSITE" id="PS50936">
    <property type="entry name" value="ENGC_GTPASE"/>
    <property type="match status" value="1"/>
</dbReference>
<dbReference type="PROSITE" id="PS51721">
    <property type="entry name" value="G_CP"/>
    <property type="match status" value="1"/>
</dbReference>
<name>RSGA2_LACPL</name>
<keyword id="KW-0963">Cytoplasm</keyword>
<keyword id="KW-0342">GTP-binding</keyword>
<keyword id="KW-0378">Hydrolase</keyword>
<keyword id="KW-0479">Metal-binding</keyword>
<keyword id="KW-0547">Nucleotide-binding</keyword>
<keyword id="KW-1185">Reference proteome</keyword>
<keyword id="KW-0690">Ribosome biogenesis</keyword>
<keyword id="KW-0694">RNA-binding</keyword>
<keyword id="KW-0699">rRNA-binding</keyword>
<keyword id="KW-0862">Zinc</keyword>
<gene>
    <name evidence="1" type="primary">rsgA2</name>
    <name type="ordered locus">lp_1687</name>
</gene>
<evidence type="ECO:0000255" key="1">
    <source>
        <dbReference type="HAMAP-Rule" id="MF_01820"/>
    </source>
</evidence>
<evidence type="ECO:0000255" key="2">
    <source>
        <dbReference type="PROSITE-ProRule" id="PRU01058"/>
    </source>
</evidence>
<reference key="1">
    <citation type="journal article" date="2003" name="Proc. Natl. Acad. Sci. U.S.A.">
        <title>Complete genome sequence of Lactobacillus plantarum WCFS1.</title>
        <authorList>
            <person name="Kleerebezem M."/>
            <person name="Boekhorst J."/>
            <person name="van Kranenburg R."/>
            <person name="Molenaar D."/>
            <person name="Kuipers O.P."/>
            <person name="Leer R."/>
            <person name="Tarchini R."/>
            <person name="Peters S.A."/>
            <person name="Sandbrink H.M."/>
            <person name="Fiers M.W.E.J."/>
            <person name="Stiekema W."/>
            <person name="Klein Lankhorst R.M."/>
            <person name="Bron P.A."/>
            <person name="Hoffer S.M."/>
            <person name="Nierop Groot M.N."/>
            <person name="Kerkhoven R."/>
            <person name="De Vries M."/>
            <person name="Ursing B."/>
            <person name="De Vos W.M."/>
            <person name="Siezen R.J."/>
        </authorList>
    </citation>
    <scope>NUCLEOTIDE SEQUENCE [LARGE SCALE GENOMIC DNA]</scope>
    <source>
        <strain>ATCC BAA-793 / NCIMB 8826 / WCFS1</strain>
    </source>
</reference>
<reference key="2">
    <citation type="journal article" date="2012" name="J. Bacteriol.">
        <title>Complete resequencing and reannotation of the Lactobacillus plantarum WCFS1 genome.</title>
        <authorList>
            <person name="Siezen R.J."/>
            <person name="Francke C."/>
            <person name="Renckens B."/>
            <person name="Boekhorst J."/>
            <person name="Wels M."/>
            <person name="Kleerebezem M."/>
            <person name="van Hijum S.A."/>
        </authorList>
    </citation>
    <scope>NUCLEOTIDE SEQUENCE [LARGE SCALE GENOMIC DNA]</scope>
    <scope>GENOME REANNOTATION</scope>
    <source>
        <strain>ATCC BAA-793 / NCIMB 8826 / WCFS1</strain>
    </source>
</reference>
<comment type="function">
    <text evidence="1">One of several proteins that assist in the late maturation steps of the functional core of the 30S ribosomal subunit. Helps release RbfA from mature subunits. May play a role in the assembly of ribosomal proteins into the subunit. Circularly permuted GTPase that catalyzes slow GTP hydrolysis, GTPase activity is stimulated by the 30S ribosomal subunit.</text>
</comment>
<comment type="cofactor">
    <cofactor evidence="1">
        <name>Zn(2+)</name>
        <dbReference type="ChEBI" id="CHEBI:29105"/>
    </cofactor>
    <text evidence="1">Binds 1 zinc ion per subunit.</text>
</comment>
<comment type="subunit">
    <text evidence="1">Monomer. Associates with 30S ribosomal subunit, binds 16S rRNA.</text>
</comment>
<comment type="subcellular location">
    <subcellularLocation>
        <location evidence="1">Cytoplasm</location>
    </subcellularLocation>
</comment>
<comment type="similarity">
    <text evidence="1">Belongs to the TRAFAC class YlqF/YawG GTPase family. RsgA subfamily.</text>
</comment>
<proteinExistence type="inferred from homology"/>
<accession>Q88WF3</accession>
<accession>F9UP50</accession>
<sequence>MTINLIKYGLTTAVQADLTKENGQILGRIIGQHRDWYQVITTAGERSAQVTGKLAYEAASPAAFPAVGDWVCLSSSADNQAQIEAIAPRQSVLARGAVNRQDGQIIATNINTIFICMSLNADFNVRRLERYLTIAWDSGALPVIVLTKADLCTDLATKLRAVADVSVGVPTITCSVETGQGLDELQPYLTTGQTVAFVGSSGVGKSTLINRLLGQDILATKSIRTDDNKGRHTTTSRQLIPLPTGACVIDTPGMRELQIFMGDLNQTFAEIAALATQCKFNDCTHTSEPGCAVRAAVEVGTVTSERLQSYQKLQREMSYQGLNSRQLEQAKIQRMFGGKQAMKRVKQRYHRD</sequence>
<protein>
    <recommendedName>
        <fullName evidence="1">Small ribosomal subunit biogenesis GTPase RsgA 2</fullName>
        <ecNumber evidence="1">3.6.1.-</ecNumber>
    </recommendedName>
</protein>
<organism>
    <name type="scientific">Lactiplantibacillus plantarum (strain ATCC BAA-793 / NCIMB 8826 / WCFS1)</name>
    <name type="common">Lactobacillus plantarum</name>
    <dbReference type="NCBI Taxonomy" id="220668"/>
    <lineage>
        <taxon>Bacteria</taxon>
        <taxon>Bacillati</taxon>
        <taxon>Bacillota</taxon>
        <taxon>Bacilli</taxon>
        <taxon>Lactobacillales</taxon>
        <taxon>Lactobacillaceae</taxon>
        <taxon>Lactiplantibacillus</taxon>
    </lineage>
</organism>
<feature type="chain" id="PRO_0000171484" description="Small ribosomal subunit biogenesis GTPase RsgA 2">
    <location>
        <begin position="1"/>
        <end position="352"/>
    </location>
</feature>
<feature type="domain" description="CP-type G" evidence="2">
    <location>
        <begin position="100"/>
        <end position="257"/>
    </location>
</feature>
<feature type="binding site" evidence="1">
    <location>
        <begin position="147"/>
        <end position="150"/>
    </location>
    <ligand>
        <name>GTP</name>
        <dbReference type="ChEBI" id="CHEBI:37565"/>
    </ligand>
</feature>
<feature type="binding site" evidence="1">
    <location>
        <begin position="199"/>
        <end position="207"/>
    </location>
    <ligand>
        <name>GTP</name>
        <dbReference type="ChEBI" id="CHEBI:37565"/>
    </ligand>
</feature>
<feature type="binding site" evidence="1">
    <location>
        <position position="278"/>
    </location>
    <ligand>
        <name>Zn(2+)</name>
        <dbReference type="ChEBI" id="CHEBI:29105"/>
    </ligand>
</feature>
<feature type="binding site" evidence="1">
    <location>
        <position position="283"/>
    </location>
    <ligand>
        <name>Zn(2+)</name>
        <dbReference type="ChEBI" id="CHEBI:29105"/>
    </ligand>
</feature>
<feature type="binding site" evidence="1">
    <location>
        <position position="285"/>
    </location>
    <ligand>
        <name>Zn(2+)</name>
        <dbReference type="ChEBI" id="CHEBI:29105"/>
    </ligand>
</feature>
<feature type="binding site" evidence="1">
    <location>
        <position position="291"/>
    </location>
    <ligand>
        <name>Zn(2+)</name>
        <dbReference type="ChEBI" id="CHEBI:29105"/>
    </ligand>
</feature>